<comment type="function">
    <text evidence="2">Antimicrobial peptide with potent activity against bacteria S.aureus (MIC=9.3 uM), weak activity against E.coli (MIC&gt;100 uM), and weak activity against pathogenic yeasts C.albicans (MIC=100 uM) and C.glabrata (MIC=100 uM). Is not very effective against P.aeruginosa (MIC&gt;300 uM). Also provokes high hemolysis on human erythrocytes (HC(50)=4.8 uM).</text>
</comment>
<comment type="subcellular location">
    <subcellularLocation>
        <location evidence="5">Secreted</location>
    </subcellularLocation>
    <subcellularLocation>
        <location evidence="5">Target cell membrane</location>
    </subcellularLocation>
</comment>
<comment type="tissue specificity">
    <text evidence="5">Expressed by the venom gland.</text>
</comment>
<comment type="similarity">
    <text evidence="4">Belongs to the non-disulfide-bridged peptide (NDBP) superfamily. Short antimicrobial peptide (group 4) family.</text>
</comment>
<comment type="caution">
    <text evidence="4">Jimenez-Vargas et al. (2021) report this protein originates from Mesomexovis variegatus, while Quintero-Hernandez et al. (2015) sequenced it from Vaejovis punctatus. This discrepancy may stem from taxonomic history: V.punctatus was previously classified as V.punctatus variegatus Pocock, 1898. It should be noted that Mesomexovis variegatus and Mesomexovis punctatus represent two distinct species.</text>
</comment>
<dbReference type="EMBL" id="JZ818435">
    <property type="status" value="NOT_ANNOTATED_CDS"/>
    <property type="molecule type" value="mRNA"/>
</dbReference>
<dbReference type="GO" id="GO:0005576">
    <property type="term" value="C:extracellular region"/>
    <property type="evidence" value="ECO:0007669"/>
    <property type="project" value="UniProtKB-SubCell"/>
</dbReference>
<dbReference type="GO" id="GO:0016020">
    <property type="term" value="C:membrane"/>
    <property type="evidence" value="ECO:0007669"/>
    <property type="project" value="UniProtKB-KW"/>
</dbReference>
<dbReference type="GO" id="GO:0044218">
    <property type="term" value="C:other organism cell membrane"/>
    <property type="evidence" value="ECO:0007669"/>
    <property type="project" value="UniProtKB-KW"/>
</dbReference>
<dbReference type="GO" id="GO:0042742">
    <property type="term" value="P:defense response to bacterium"/>
    <property type="evidence" value="ECO:0007669"/>
    <property type="project" value="UniProtKB-KW"/>
</dbReference>
<dbReference type="GO" id="GO:0050832">
    <property type="term" value="P:defense response to fungus"/>
    <property type="evidence" value="ECO:0007669"/>
    <property type="project" value="UniProtKB-KW"/>
</dbReference>
<dbReference type="GO" id="GO:0031640">
    <property type="term" value="P:killing of cells of another organism"/>
    <property type="evidence" value="ECO:0007669"/>
    <property type="project" value="UniProtKB-KW"/>
</dbReference>
<accession>P0DRH6</accession>
<feature type="signal peptide" evidence="1">
    <location>
        <begin position="1"/>
        <end position="23"/>
    </location>
</feature>
<feature type="peptide" id="PRO_0000461842" description="Antimicrobial peptide VpCT4" evidence="5">
    <location>
        <begin position="24"/>
        <end position="39"/>
    </location>
</feature>
<feature type="propeptide" id="PRO_0000461843" evidence="5">
    <location>
        <begin position="40"/>
        <end position="71"/>
    </location>
</feature>
<feature type="modified residue" description="Leucine amide" evidence="5">
    <location>
        <position position="39"/>
    </location>
</feature>
<organism>
    <name type="scientific">Mesomexovis punctatus</name>
    <name type="common">Scorpion</name>
    <name type="synonym">Vaejovis punctatus</name>
    <dbReference type="NCBI Taxonomy" id="1532993"/>
    <lineage>
        <taxon>Eukaryota</taxon>
        <taxon>Metazoa</taxon>
        <taxon>Ecdysozoa</taxon>
        <taxon>Arthropoda</taxon>
        <taxon>Chelicerata</taxon>
        <taxon>Arachnida</taxon>
        <taxon>Scorpiones</taxon>
        <taxon>Iurida</taxon>
        <taxon>Chactoidea</taxon>
        <taxon>Vaejovidae</taxon>
        <taxon>Mesomexovis</taxon>
    </lineage>
</organism>
<reference key="1">
    <citation type="journal article" date="2015" name="PLoS ONE">
        <title>Transcriptome analysis of scorpion species belonging to the Vaejovis genus.</title>
        <authorList>
            <person name="Quintero-Hernandez V."/>
            <person name="Ramirez-Carreto S."/>
            <person name="Romero-Gutierrez M.T."/>
            <person name="Valdez-Velazquez L.L."/>
            <person name="Becerril B."/>
            <person name="Possani L.D."/>
            <person name="Ortiz E."/>
        </authorList>
    </citation>
    <scope>NUCLEOTIDE SEQUENCE [MRNA]</scope>
    <scope>PROBABLE AMIDATION AT LEU-39</scope>
    <source>
        <tissue>Venom gland</tissue>
    </source>
</reference>
<reference key="2">
    <citation type="journal article" date="2021" name="Peptides">
        <title>Structural and functional characterization of NDBP-4 family antimicrobial peptides from the scorpion Mesomexovis variegatus.</title>
        <authorList>
            <person name="Jimenez-Vargas J.M."/>
            <person name="Ramirez-Carreto S."/>
            <person name="Corzo G."/>
            <person name="Possani L.D."/>
            <person name="Becerril B."/>
            <person name="Ortiz E."/>
        </authorList>
    </citation>
    <scope>FUNCTION</scope>
    <scope>SYNTHESIS OF 24-39</scope>
</reference>
<keyword id="KW-0027">Amidation</keyword>
<keyword id="KW-0044">Antibiotic</keyword>
<keyword id="KW-0929">Antimicrobial</keyword>
<keyword id="KW-0165">Cleavage on pair of basic residues</keyword>
<keyword id="KW-0204">Cytolysis</keyword>
<keyword id="KW-0295">Fungicide</keyword>
<keyword id="KW-0472">Membrane</keyword>
<keyword id="KW-0964">Secreted</keyword>
<keyword id="KW-0732">Signal</keyword>
<keyword id="KW-1052">Target cell membrane</keyword>
<keyword id="KW-1053">Target membrane</keyword>
<evidence type="ECO:0000255" key="1"/>
<evidence type="ECO:0000269" key="2">
    <source>
    </source>
</evidence>
<evidence type="ECO:0000303" key="3">
    <source>
    </source>
</evidence>
<evidence type="ECO:0000305" key="4"/>
<evidence type="ECO:0000305" key="5">
    <source>
    </source>
</evidence>
<protein>
    <recommendedName>
        <fullName evidence="3">Antimicrobial peptide VpCT4</fullName>
    </recommendedName>
</protein>
<sequence>MKTQFVILIVAIVILQLISQSEALWGALLGLGSTLLSKLGKRGVQNMDQFDDIFEPELSEADLRYLQDLLR</sequence>
<proteinExistence type="evidence at protein level"/>
<name>NDBT4_MESPU</name>